<name>NAGB_LACP7</name>
<reference key="1">
    <citation type="submission" date="2007-11" db="EMBL/GenBank/DDBJ databases">
        <title>Complete genome sequence of Clostridium phytofermentans ISDg.</title>
        <authorList>
            <person name="Leschine S.B."/>
            <person name="Warnick T.A."/>
            <person name="Blanchard J.L."/>
            <person name="Schnell D.J."/>
            <person name="Petit E.L."/>
            <person name="LaTouf W.G."/>
            <person name="Copeland A."/>
            <person name="Lucas S."/>
            <person name="Lapidus A."/>
            <person name="Barry K."/>
            <person name="Glavina del Rio T."/>
            <person name="Dalin E."/>
            <person name="Tice H."/>
            <person name="Pitluck S."/>
            <person name="Kiss H."/>
            <person name="Brettin T."/>
            <person name="Bruce D."/>
            <person name="Detter J.C."/>
            <person name="Han C."/>
            <person name="Kuske C."/>
            <person name="Schmutz J."/>
            <person name="Larimer F."/>
            <person name="Land M."/>
            <person name="Hauser L."/>
            <person name="Kyrpides N."/>
            <person name="Kim E.A."/>
            <person name="Richardson P."/>
        </authorList>
    </citation>
    <scope>NUCLEOTIDE SEQUENCE [LARGE SCALE GENOMIC DNA]</scope>
    <source>
        <strain>ATCC 700394 / DSM 18823 / ISDg</strain>
    </source>
</reference>
<protein>
    <recommendedName>
        <fullName evidence="1">Glucosamine-6-phosphate deaminase</fullName>
        <ecNumber evidence="1">3.5.99.6</ecNumber>
    </recommendedName>
    <alternativeName>
        <fullName evidence="1">GlcN6P deaminase</fullName>
        <shortName evidence="1">GNPDA</shortName>
    </alternativeName>
    <alternativeName>
        <fullName evidence="1">Glucosamine-6-phosphate isomerase</fullName>
    </alternativeName>
</protein>
<feature type="chain" id="PRO_1000085748" description="Glucosamine-6-phosphate deaminase">
    <location>
        <begin position="1"/>
        <end position="236"/>
    </location>
</feature>
<feature type="active site" description="Proton acceptor; for enolization step" evidence="1">
    <location>
        <position position="67"/>
    </location>
</feature>
<feature type="active site" description="For ring-opening step" evidence="1">
    <location>
        <position position="136"/>
    </location>
</feature>
<feature type="active site" description="Proton acceptor; for ring-opening step" evidence="1">
    <location>
        <position position="138"/>
    </location>
</feature>
<feature type="active site" description="For ring-opening step" evidence="1">
    <location>
        <position position="143"/>
    </location>
</feature>
<sequence>MKVINATSYSDLSRKAANIISAQVILKPNSVLGLATGSTPIGTYKQLIEWYNKGDIDFSSTISVNLDEYVGLEPTNEQSYRYFMTENLFRHINIPQENTHVPSGLANDMEAECQNYDALITNLGGIDLQLLGIGHNGHIGFNEPDDAFEKTTHIVSLGESTIKANARFFEDINEVPTKAITMGIKSIMQAKKVLLIANGPDKKDIIEKALYGPVTPSVPASILQLHPDLTVICCFE</sequence>
<dbReference type="EC" id="3.5.99.6" evidence="1"/>
<dbReference type="EMBL" id="CP000885">
    <property type="protein sequence ID" value="ABX43931.1"/>
    <property type="molecule type" value="Genomic_DNA"/>
</dbReference>
<dbReference type="RefSeq" id="WP_012201579.1">
    <property type="nucleotide sequence ID" value="NC_010001.1"/>
</dbReference>
<dbReference type="SMR" id="A9KIR8"/>
<dbReference type="STRING" id="357809.Cphy_3582"/>
<dbReference type="KEGG" id="cpy:Cphy_3582"/>
<dbReference type="eggNOG" id="COG0363">
    <property type="taxonomic scope" value="Bacteria"/>
</dbReference>
<dbReference type="HOGENOM" id="CLU_049611_1_1_9"/>
<dbReference type="OrthoDB" id="9791139at2"/>
<dbReference type="UniPathway" id="UPA00629">
    <property type="reaction ID" value="UER00684"/>
</dbReference>
<dbReference type="Proteomes" id="UP000000370">
    <property type="component" value="Chromosome"/>
</dbReference>
<dbReference type="GO" id="GO:0005737">
    <property type="term" value="C:cytoplasm"/>
    <property type="evidence" value="ECO:0007669"/>
    <property type="project" value="TreeGrafter"/>
</dbReference>
<dbReference type="GO" id="GO:0004342">
    <property type="term" value="F:glucosamine-6-phosphate deaminase activity"/>
    <property type="evidence" value="ECO:0007669"/>
    <property type="project" value="UniProtKB-UniRule"/>
</dbReference>
<dbReference type="GO" id="GO:0042802">
    <property type="term" value="F:identical protein binding"/>
    <property type="evidence" value="ECO:0007669"/>
    <property type="project" value="TreeGrafter"/>
</dbReference>
<dbReference type="GO" id="GO:0005975">
    <property type="term" value="P:carbohydrate metabolic process"/>
    <property type="evidence" value="ECO:0007669"/>
    <property type="project" value="InterPro"/>
</dbReference>
<dbReference type="GO" id="GO:0006043">
    <property type="term" value="P:glucosamine catabolic process"/>
    <property type="evidence" value="ECO:0007669"/>
    <property type="project" value="TreeGrafter"/>
</dbReference>
<dbReference type="GO" id="GO:0006046">
    <property type="term" value="P:N-acetylglucosamine catabolic process"/>
    <property type="evidence" value="ECO:0007669"/>
    <property type="project" value="TreeGrafter"/>
</dbReference>
<dbReference type="GO" id="GO:0019262">
    <property type="term" value="P:N-acetylneuraminate catabolic process"/>
    <property type="evidence" value="ECO:0007669"/>
    <property type="project" value="UniProtKB-UniRule"/>
</dbReference>
<dbReference type="CDD" id="cd01399">
    <property type="entry name" value="GlcN6P_deaminase"/>
    <property type="match status" value="1"/>
</dbReference>
<dbReference type="FunFam" id="3.40.50.1360:FF:000003">
    <property type="entry name" value="Glucosamine-6-phosphate deaminase"/>
    <property type="match status" value="1"/>
</dbReference>
<dbReference type="Gene3D" id="3.40.50.1360">
    <property type="match status" value="1"/>
</dbReference>
<dbReference type="HAMAP" id="MF_01241">
    <property type="entry name" value="GlcN6P_deamin"/>
    <property type="match status" value="1"/>
</dbReference>
<dbReference type="InterPro" id="IPR006148">
    <property type="entry name" value="Glc/Gal-6P_isomerase"/>
</dbReference>
<dbReference type="InterPro" id="IPR004547">
    <property type="entry name" value="Glucosamine6P_isomerase"/>
</dbReference>
<dbReference type="InterPro" id="IPR018321">
    <property type="entry name" value="Glucosamine6P_isomerase_CS"/>
</dbReference>
<dbReference type="InterPro" id="IPR037171">
    <property type="entry name" value="NagB/RpiA_transferase-like"/>
</dbReference>
<dbReference type="NCBIfam" id="TIGR00502">
    <property type="entry name" value="nagB"/>
    <property type="match status" value="1"/>
</dbReference>
<dbReference type="PANTHER" id="PTHR11280">
    <property type="entry name" value="GLUCOSAMINE-6-PHOSPHATE ISOMERASE"/>
    <property type="match status" value="1"/>
</dbReference>
<dbReference type="PANTHER" id="PTHR11280:SF5">
    <property type="entry name" value="GLUCOSAMINE-6-PHOSPHATE ISOMERASE"/>
    <property type="match status" value="1"/>
</dbReference>
<dbReference type="Pfam" id="PF01182">
    <property type="entry name" value="Glucosamine_iso"/>
    <property type="match status" value="1"/>
</dbReference>
<dbReference type="SUPFAM" id="SSF100950">
    <property type="entry name" value="NagB/RpiA/CoA transferase-like"/>
    <property type="match status" value="1"/>
</dbReference>
<dbReference type="PROSITE" id="PS01161">
    <property type="entry name" value="GLC_GALNAC_ISOMERASE"/>
    <property type="match status" value="1"/>
</dbReference>
<comment type="function">
    <text evidence="1">Catalyzes the reversible isomerization-deamination of glucosamine 6-phosphate (GlcN6P) to form fructose 6-phosphate (Fru6P) and ammonium ion.</text>
</comment>
<comment type="catalytic activity">
    <reaction evidence="1">
        <text>alpha-D-glucosamine 6-phosphate + H2O = beta-D-fructose 6-phosphate + NH4(+)</text>
        <dbReference type="Rhea" id="RHEA:12172"/>
        <dbReference type="ChEBI" id="CHEBI:15377"/>
        <dbReference type="ChEBI" id="CHEBI:28938"/>
        <dbReference type="ChEBI" id="CHEBI:57634"/>
        <dbReference type="ChEBI" id="CHEBI:75989"/>
        <dbReference type="EC" id="3.5.99.6"/>
    </reaction>
</comment>
<comment type="pathway">
    <text evidence="1">Amino-sugar metabolism; N-acetylneuraminate degradation; D-fructose 6-phosphate from N-acetylneuraminate: step 5/5.</text>
</comment>
<comment type="similarity">
    <text evidence="1">Belongs to the glucosamine/galactosamine-6-phosphate isomerase family. NagB subfamily.</text>
</comment>
<gene>
    <name evidence="1" type="primary">nagB</name>
    <name type="ordered locus">Cphy_3582</name>
</gene>
<proteinExistence type="inferred from homology"/>
<accession>A9KIR8</accession>
<evidence type="ECO:0000255" key="1">
    <source>
        <dbReference type="HAMAP-Rule" id="MF_01241"/>
    </source>
</evidence>
<keyword id="KW-0119">Carbohydrate metabolism</keyword>
<keyword id="KW-0378">Hydrolase</keyword>
<keyword id="KW-1185">Reference proteome</keyword>
<organism>
    <name type="scientific">Lachnoclostridium phytofermentans (strain ATCC 700394 / DSM 18823 / ISDg)</name>
    <name type="common">Clostridium phytofermentans</name>
    <dbReference type="NCBI Taxonomy" id="357809"/>
    <lineage>
        <taxon>Bacteria</taxon>
        <taxon>Bacillati</taxon>
        <taxon>Bacillota</taxon>
        <taxon>Clostridia</taxon>
        <taxon>Lachnospirales</taxon>
        <taxon>Lachnospiraceae</taxon>
    </lineage>
</organism>